<name>DUT_CHLTA</name>
<keyword id="KW-0378">Hydrolase</keyword>
<keyword id="KW-0460">Magnesium</keyword>
<keyword id="KW-0479">Metal-binding</keyword>
<keyword id="KW-0546">Nucleotide metabolism</keyword>
<organism>
    <name type="scientific">Chlamydia trachomatis serovar A (strain ATCC VR-571B / DSM 19440 / HAR-13)</name>
    <dbReference type="NCBI Taxonomy" id="315277"/>
    <lineage>
        <taxon>Bacteria</taxon>
        <taxon>Pseudomonadati</taxon>
        <taxon>Chlamydiota</taxon>
        <taxon>Chlamydiia</taxon>
        <taxon>Chlamydiales</taxon>
        <taxon>Chlamydiaceae</taxon>
        <taxon>Chlamydia/Chlamydophila group</taxon>
        <taxon>Chlamydia</taxon>
    </lineage>
</organism>
<evidence type="ECO:0000255" key="1">
    <source>
        <dbReference type="HAMAP-Rule" id="MF_00116"/>
    </source>
</evidence>
<sequence length="145" mass="15337">MKFFCKLESGSSLPEYATSGASGADVRANINEPIAILPGQRALIPTGISVEIPHGYEIQVRSRSGLASKYGVIVLQSPGTVDADYRGEIRVILANLGEATFIVEPGMRIAQLVVAKVEQVSFVETQEELTATARGTGGFGHTGEC</sequence>
<proteinExistence type="inferred from homology"/>
<protein>
    <recommendedName>
        <fullName evidence="1">Deoxyuridine 5'-triphosphate nucleotidohydrolase</fullName>
        <shortName evidence="1">dUTPase</shortName>
        <ecNumber evidence="1">3.6.1.23</ecNumber>
    </recommendedName>
    <alternativeName>
        <fullName evidence="1">dUTP pyrophosphatase</fullName>
    </alternativeName>
</protein>
<dbReference type="EC" id="3.6.1.23" evidence="1"/>
<dbReference type="EMBL" id="CP000051">
    <property type="protein sequence ID" value="AAX50552.1"/>
    <property type="molecule type" value="Genomic_DNA"/>
</dbReference>
<dbReference type="RefSeq" id="WP_009871640.1">
    <property type="nucleotide sequence ID" value="NC_007429.1"/>
</dbReference>
<dbReference type="SMR" id="Q3KM70"/>
<dbReference type="KEGG" id="cta:CTA_0314"/>
<dbReference type="HOGENOM" id="CLU_068508_1_2_0"/>
<dbReference type="UniPathway" id="UPA00610">
    <property type="reaction ID" value="UER00666"/>
</dbReference>
<dbReference type="Proteomes" id="UP000002532">
    <property type="component" value="Chromosome"/>
</dbReference>
<dbReference type="GO" id="GO:0004170">
    <property type="term" value="F:dUTP diphosphatase activity"/>
    <property type="evidence" value="ECO:0007669"/>
    <property type="project" value="UniProtKB-UniRule"/>
</dbReference>
<dbReference type="GO" id="GO:0000287">
    <property type="term" value="F:magnesium ion binding"/>
    <property type="evidence" value="ECO:0007669"/>
    <property type="project" value="UniProtKB-UniRule"/>
</dbReference>
<dbReference type="GO" id="GO:0006226">
    <property type="term" value="P:dUMP biosynthetic process"/>
    <property type="evidence" value="ECO:0007669"/>
    <property type="project" value="UniProtKB-UniRule"/>
</dbReference>
<dbReference type="GO" id="GO:0046081">
    <property type="term" value="P:dUTP catabolic process"/>
    <property type="evidence" value="ECO:0007669"/>
    <property type="project" value="InterPro"/>
</dbReference>
<dbReference type="CDD" id="cd07557">
    <property type="entry name" value="trimeric_dUTPase"/>
    <property type="match status" value="1"/>
</dbReference>
<dbReference type="FunFam" id="2.70.40.10:FF:000008">
    <property type="entry name" value="Deoxyuridine 5'-triphosphate nucleotidohydrolase"/>
    <property type="match status" value="1"/>
</dbReference>
<dbReference type="Gene3D" id="2.70.40.10">
    <property type="match status" value="1"/>
</dbReference>
<dbReference type="HAMAP" id="MF_00116">
    <property type="entry name" value="dUTPase_bact"/>
    <property type="match status" value="1"/>
</dbReference>
<dbReference type="InterPro" id="IPR008181">
    <property type="entry name" value="dUTPase"/>
</dbReference>
<dbReference type="InterPro" id="IPR029054">
    <property type="entry name" value="dUTPase-like"/>
</dbReference>
<dbReference type="InterPro" id="IPR036157">
    <property type="entry name" value="dUTPase-like_sf"/>
</dbReference>
<dbReference type="InterPro" id="IPR033704">
    <property type="entry name" value="dUTPase_trimeric"/>
</dbReference>
<dbReference type="NCBIfam" id="TIGR00576">
    <property type="entry name" value="dut"/>
    <property type="match status" value="1"/>
</dbReference>
<dbReference type="NCBIfam" id="NF001862">
    <property type="entry name" value="PRK00601.1"/>
    <property type="match status" value="1"/>
</dbReference>
<dbReference type="PANTHER" id="PTHR11241">
    <property type="entry name" value="DEOXYURIDINE 5'-TRIPHOSPHATE NUCLEOTIDOHYDROLASE"/>
    <property type="match status" value="1"/>
</dbReference>
<dbReference type="PANTHER" id="PTHR11241:SF0">
    <property type="entry name" value="DEOXYURIDINE 5'-TRIPHOSPHATE NUCLEOTIDOHYDROLASE"/>
    <property type="match status" value="1"/>
</dbReference>
<dbReference type="Pfam" id="PF00692">
    <property type="entry name" value="dUTPase"/>
    <property type="match status" value="1"/>
</dbReference>
<dbReference type="SUPFAM" id="SSF51283">
    <property type="entry name" value="dUTPase-like"/>
    <property type="match status" value="1"/>
</dbReference>
<accession>Q3KM70</accession>
<gene>
    <name evidence="1" type="primary">dut</name>
    <name type="ordered locus">CTA_0314</name>
</gene>
<feature type="chain" id="PRO_0000231404" description="Deoxyuridine 5'-triphosphate nucleotidohydrolase">
    <location>
        <begin position="1"/>
        <end position="145"/>
    </location>
</feature>
<feature type="binding site" evidence="1">
    <location>
        <begin position="63"/>
        <end position="65"/>
    </location>
    <ligand>
        <name>substrate</name>
    </ligand>
</feature>
<feature type="binding site" evidence="1">
    <location>
        <position position="76"/>
    </location>
    <ligand>
        <name>substrate</name>
    </ligand>
</feature>
<feature type="binding site" evidence="1">
    <location>
        <begin position="80"/>
        <end position="82"/>
    </location>
    <ligand>
        <name>substrate</name>
    </ligand>
</feature>
<comment type="function">
    <text evidence="1">This enzyme is involved in nucleotide metabolism: it produces dUMP, the immediate precursor of thymidine nucleotides and it decreases the intracellular concentration of dUTP so that uracil cannot be incorporated into DNA.</text>
</comment>
<comment type="catalytic activity">
    <reaction evidence="1">
        <text>dUTP + H2O = dUMP + diphosphate + H(+)</text>
        <dbReference type="Rhea" id="RHEA:10248"/>
        <dbReference type="ChEBI" id="CHEBI:15377"/>
        <dbReference type="ChEBI" id="CHEBI:15378"/>
        <dbReference type="ChEBI" id="CHEBI:33019"/>
        <dbReference type="ChEBI" id="CHEBI:61555"/>
        <dbReference type="ChEBI" id="CHEBI:246422"/>
        <dbReference type="EC" id="3.6.1.23"/>
    </reaction>
</comment>
<comment type="cofactor">
    <cofactor evidence="1">
        <name>Mg(2+)</name>
        <dbReference type="ChEBI" id="CHEBI:18420"/>
    </cofactor>
</comment>
<comment type="pathway">
    <text evidence="1">Pyrimidine metabolism; dUMP biosynthesis; dUMP from dCTP (dUTP route): step 2/2.</text>
</comment>
<comment type="similarity">
    <text evidence="1">Belongs to the dUTPase family.</text>
</comment>
<reference key="1">
    <citation type="journal article" date="2005" name="Infect. Immun.">
        <title>Comparative genomic analysis of Chlamydia trachomatis oculotropic and genitotropic strains.</title>
        <authorList>
            <person name="Carlson J.H."/>
            <person name="Porcella S.F."/>
            <person name="McClarty G."/>
            <person name="Caldwell H.D."/>
        </authorList>
    </citation>
    <scope>NUCLEOTIDE SEQUENCE [LARGE SCALE GENOMIC DNA]</scope>
    <source>
        <strain>ATCC VR-571B / DSM 19440 / HAR-13</strain>
    </source>
</reference>